<feature type="chain" id="PRO_0000203003" description="Altered inheritance of mitochondria protein 21">
    <location>
        <begin position="1"/>
        <end position="679"/>
    </location>
</feature>
<feature type="region of interest" description="Disordered" evidence="1">
    <location>
        <begin position="1"/>
        <end position="85"/>
    </location>
</feature>
<feature type="region of interest" description="Disordered" evidence="1">
    <location>
        <begin position="110"/>
        <end position="522"/>
    </location>
</feature>
<feature type="region of interest" description="Interaction with SH3 domain of ABP1">
    <location>
        <begin position="383"/>
        <end position="396"/>
    </location>
</feature>
<feature type="region of interest" description="Disordered" evidence="1">
    <location>
        <begin position="549"/>
        <end position="580"/>
    </location>
</feature>
<feature type="region of interest" description="Disordered" evidence="1">
    <location>
        <begin position="593"/>
        <end position="679"/>
    </location>
</feature>
<feature type="compositionally biased region" description="Basic and acidic residues" evidence="1">
    <location>
        <begin position="9"/>
        <end position="19"/>
    </location>
</feature>
<feature type="compositionally biased region" description="Basic residues" evidence="1">
    <location>
        <begin position="110"/>
        <end position="119"/>
    </location>
</feature>
<feature type="compositionally biased region" description="Polar residues" evidence="1">
    <location>
        <begin position="133"/>
        <end position="149"/>
    </location>
</feature>
<feature type="compositionally biased region" description="Polar residues" evidence="1">
    <location>
        <begin position="164"/>
        <end position="178"/>
    </location>
</feature>
<feature type="compositionally biased region" description="Basic and acidic residues" evidence="1">
    <location>
        <begin position="179"/>
        <end position="213"/>
    </location>
</feature>
<feature type="compositionally biased region" description="Basic and acidic residues" evidence="1">
    <location>
        <begin position="243"/>
        <end position="272"/>
    </location>
</feature>
<feature type="compositionally biased region" description="Polar residues" evidence="1">
    <location>
        <begin position="296"/>
        <end position="323"/>
    </location>
</feature>
<feature type="compositionally biased region" description="Basic and acidic residues" evidence="1">
    <location>
        <begin position="339"/>
        <end position="361"/>
    </location>
</feature>
<feature type="compositionally biased region" description="Basic and acidic residues" evidence="1">
    <location>
        <begin position="372"/>
        <end position="383"/>
    </location>
</feature>
<feature type="compositionally biased region" description="Polar residues" evidence="1">
    <location>
        <begin position="414"/>
        <end position="427"/>
    </location>
</feature>
<feature type="compositionally biased region" description="Polar residues" evidence="1">
    <location>
        <begin position="437"/>
        <end position="452"/>
    </location>
</feature>
<feature type="compositionally biased region" description="Basic and acidic residues" evidence="1">
    <location>
        <begin position="471"/>
        <end position="482"/>
    </location>
</feature>
<feature type="compositionally biased region" description="Basic residues" evidence="1">
    <location>
        <begin position="501"/>
        <end position="512"/>
    </location>
</feature>
<feature type="compositionally biased region" description="Basic and acidic residues" evidence="1">
    <location>
        <begin position="556"/>
        <end position="576"/>
    </location>
</feature>
<feature type="compositionally biased region" description="Polar residues" evidence="1">
    <location>
        <begin position="603"/>
        <end position="613"/>
    </location>
</feature>
<feature type="compositionally biased region" description="Basic and acidic residues" evidence="1">
    <location>
        <begin position="667"/>
        <end position="679"/>
    </location>
</feature>
<feature type="modified residue" description="Phosphothreonine" evidence="10 12">
    <location>
        <position position="18"/>
    </location>
</feature>
<feature type="modified residue" description="Phosphoserine" evidence="10 11 12">
    <location>
        <position position="36"/>
    </location>
</feature>
<feature type="modified residue" description="Phosphothreonine" evidence="10 12">
    <location>
        <position position="58"/>
    </location>
</feature>
<feature type="modified residue" description="Phosphoserine" evidence="12">
    <location>
        <position position="70"/>
    </location>
</feature>
<feature type="modified residue" description="Phosphothreonine" evidence="10 12">
    <location>
        <position position="85"/>
    </location>
</feature>
<feature type="modified residue" description="Phosphoserine" evidence="12">
    <location>
        <position position="104"/>
    </location>
</feature>
<feature type="modified residue" description="Phosphoserine" evidence="10 12">
    <location>
        <position position="183"/>
    </location>
</feature>
<feature type="modified residue" description="Phosphoserine" evidence="12">
    <location>
        <position position="206"/>
    </location>
</feature>
<feature type="modified residue" description="Phosphoserine" evidence="11">
    <location>
        <position position="231"/>
    </location>
</feature>
<feature type="modified residue" description="Phosphothreonine" evidence="10 11 12">
    <location>
        <position position="277"/>
    </location>
</feature>
<feature type="modified residue" description="Phosphoserine" evidence="12">
    <location>
        <position position="284"/>
    </location>
</feature>
<feature type="modified residue" description="Phosphoserine" evidence="11">
    <location>
        <position position="324"/>
    </location>
</feature>
<feature type="modified residue" description="Phosphothreonine" evidence="12">
    <location>
        <position position="552"/>
    </location>
</feature>
<feature type="modified residue" description="Phosphoserine" evidence="11 12">
    <location>
        <position position="576"/>
    </location>
</feature>
<feature type="modified residue" description="Phosphoserine" evidence="11 12">
    <location>
        <position position="620"/>
    </location>
</feature>
<feature type="modified residue" description="Phosphoserine" evidence="12">
    <location>
        <position position="623"/>
    </location>
</feature>
<feature type="modified residue" description="Phosphoserine" evidence="10">
    <location>
        <position position="625"/>
    </location>
</feature>
<feature type="modified residue" description="Phosphoserine" evidence="12">
    <location>
        <position position="627"/>
    </location>
</feature>
<feature type="modified residue" description="Phosphoserine" evidence="12">
    <location>
        <position position="667"/>
    </location>
</feature>
<feature type="modified residue" description="Phosphoserine" evidence="11 12">
    <location>
        <position position="671"/>
    </location>
</feature>
<feature type="modified residue" description="Phosphoserine" evidence="12">
    <location>
        <position position="675"/>
    </location>
</feature>
<feature type="modified residue" description="Phosphoserine" evidence="10 12">
    <location>
        <position position="678"/>
    </location>
</feature>
<name>AIM21_YEAST</name>
<evidence type="ECO:0000256" key="1">
    <source>
        <dbReference type="SAM" id="MobiDB-lite"/>
    </source>
</evidence>
<evidence type="ECO:0000269" key="2">
    <source>
    </source>
</evidence>
<evidence type="ECO:0000269" key="3">
    <source>
    </source>
</evidence>
<evidence type="ECO:0000269" key="4">
    <source>
    </source>
</evidence>
<evidence type="ECO:0000269" key="5">
    <source>
    </source>
</evidence>
<evidence type="ECO:0000269" key="6">
    <source>
    </source>
</evidence>
<evidence type="ECO:0000269" key="7">
    <source>
    </source>
</evidence>
<evidence type="ECO:0000269" key="8">
    <source>
    </source>
</evidence>
<evidence type="ECO:0000305" key="9"/>
<evidence type="ECO:0007744" key="10">
    <source>
    </source>
</evidence>
<evidence type="ECO:0007744" key="11">
    <source>
    </source>
</evidence>
<evidence type="ECO:0007744" key="12">
    <source>
    </source>
</evidence>
<organism>
    <name type="scientific">Saccharomyces cerevisiae (strain ATCC 204508 / S288c)</name>
    <name type="common">Baker's yeast</name>
    <dbReference type="NCBI Taxonomy" id="559292"/>
    <lineage>
        <taxon>Eukaryota</taxon>
        <taxon>Fungi</taxon>
        <taxon>Dikarya</taxon>
        <taxon>Ascomycota</taxon>
        <taxon>Saccharomycotina</taxon>
        <taxon>Saccharomycetes</taxon>
        <taxon>Saccharomycetales</taxon>
        <taxon>Saccharomycetaceae</taxon>
        <taxon>Saccharomyces</taxon>
    </lineage>
</organism>
<proteinExistence type="evidence at protein level"/>
<accession>P40563</accession>
<accession>D6VVT3</accession>
<protein>
    <recommendedName>
        <fullName>Altered inheritance of mitochondria protein 21</fullName>
    </recommendedName>
</protein>
<keyword id="KW-0963">Cytoplasm</keyword>
<keyword id="KW-0206">Cytoskeleton</keyword>
<keyword id="KW-0597">Phosphoprotein</keyword>
<keyword id="KW-1185">Reference proteome</keyword>
<dbReference type="EMBL" id="X79743">
    <property type="status" value="NOT_ANNOTATED_CDS"/>
    <property type="molecule type" value="Genomic_DNA"/>
</dbReference>
<dbReference type="EMBL" id="Z38062">
    <property type="protein sequence ID" value="CAA86205.1"/>
    <property type="molecule type" value="Genomic_DNA"/>
</dbReference>
<dbReference type="EMBL" id="BK006942">
    <property type="protein sequence ID" value="DAA08549.1"/>
    <property type="molecule type" value="Genomic_DNA"/>
</dbReference>
<dbReference type="PIR" id="S48437">
    <property type="entry name" value="S48437"/>
</dbReference>
<dbReference type="RefSeq" id="NP_012268.3">
    <property type="nucleotide sequence ID" value="NM_001179525.3"/>
</dbReference>
<dbReference type="BioGRID" id="34994">
    <property type="interactions" value="142"/>
</dbReference>
<dbReference type="ComplexPortal" id="CPX-3541">
    <property type="entry name" value="AIM21-TDA2 actin assembly regulator complex"/>
</dbReference>
<dbReference type="DIP" id="DIP-5096N"/>
<dbReference type="FunCoup" id="P40563">
    <property type="interactions" value="134"/>
</dbReference>
<dbReference type="IntAct" id="P40563">
    <property type="interactions" value="23"/>
</dbReference>
<dbReference type="MINT" id="P40563"/>
<dbReference type="STRING" id="4932.YIR003W"/>
<dbReference type="GlyGen" id="P40563">
    <property type="glycosylation" value="1 site"/>
</dbReference>
<dbReference type="iPTMnet" id="P40563"/>
<dbReference type="PaxDb" id="4932-YIR003W"/>
<dbReference type="PeptideAtlas" id="P40563"/>
<dbReference type="EnsemblFungi" id="YIR003W_mRNA">
    <property type="protein sequence ID" value="YIR003W"/>
    <property type="gene ID" value="YIR003W"/>
</dbReference>
<dbReference type="GeneID" id="854819"/>
<dbReference type="KEGG" id="sce:YIR003W"/>
<dbReference type="AGR" id="SGD:S000001442"/>
<dbReference type="SGD" id="S000001442">
    <property type="gene designation" value="AIM21"/>
</dbReference>
<dbReference type="VEuPathDB" id="FungiDB:YIR003W"/>
<dbReference type="eggNOG" id="ENOG502S25J">
    <property type="taxonomic scope" value="Eukaryota"/>
</dbReference>
<dbReference type="HOGENOM" id="CLU_418608_0_0_1"/>
<dbReference type="InParanoid" id="P40563"/>
<dbReference type="OMA" id="FQQMFNQ"/>
<dbReference type="OrthoDB" id="3995855at2759"/>
<dbReference type="BioCyc" id="YEAST:G3O-31424-MONOMER"/>
<dbReference type="BioGRID-ORCS" id="854819">
    <property type="hits" value="2 hits in 10 CRISPR screens"/>
</dbReference>
<dbReference type="PRO" id="PR:P40563"/>
<dbReference type="Proteomes" id="UP000002311">
    <property type="component" value="Chromosome IX"/>
</dbReference>
<dbReference type="RNAct" id="P40563">
    <property type="molecule type" value="protein"/>
</dbReference>
<dbReference type="GO" id="GO:0030479">
    <property type="term" value="C:actin cortical patch"/>
    <property type="evidence" value="ECO:0000314"/>
    <property type="project" value="SGD"/>
</dbReference>
<dbReference type="GO" id="GO:0015629">
    <property type="term" value="C:actin cytoskeleton"/>
    <property type="evidence" value="ECO:0007005"/>
    <property type="project" value="SGD"/>
</dbReference>
<dbReference type="GO" id="GO:0110131">
    <property type="term" value="C:Aim21-Tda2 complex"/>
    <property type="evidence" value="ECO:0000353"/>
    <property type="project" value="SGD"/>
</dbReference>
<dbReference type="GO" id="GO:0043332">
    <property type="term" value="C:mating projection tip"/>
    <property type="evidence" value="ECO:0007005"/>
    <property type="project" value="SGD"/>
</dbReference>
<dbReference type="GO" id="GO:0034642">
    <property type="term" value="P:mitochondrion migration along actin filament"/>
    <property type="evidence" value="ECO:0000315"/>
    <property type="project" value="SGD"/>
</dbReference>
<dbReference type="GO" id="GO:0030837">
    <property type="term" value="P:negative regulation of actin filament polymerization"/>
    <property type="evidence" value="ECO:0000314"/>
    <property type="project" value="SGD"/>
</dbReference>
<dbReference type="GO" id="GO:2000813">
    <property type="term" value="P:negative regulation of barbed-end actin filament capping"/>
    <property type="evidence" value="ECO:0000314"/>
    <property type="project" value="ComplexPortal"/>
</dbReference>
<dbReference type="InterPro" id="IPR021582">
    <property type="entry name" value="Aim21"/>
</dbReference>
<dbReference type="Pfam" id="PF11489">
    <property type="entry name" value="Aim21"/>
    <property type="match status" value="1"/>
</dbReference>
<gene>
    <name type="primary">AIM21</name>
    <name type="ordered locus">YIR003W</name>
    <name type="ORF">YIB3W</name>
</gene>
<comment type="function">
    <text evidence="8">Involved in mitochondrial migration along actin filaments.</text>
</comment>
<comment type="subunit">
    <text evidence="2 5">Interacts with ribosomes. Interacts with ABP1.</text>
</comment>
<comment type="interaction">
    <interactant intactId="EBI-25376">
        <id>P40563</id>
    </interactant>
    <interactant intactId="EBI-2036">
        <id>P15891</id>
        <label>ABP1</label>
    </interactant>
    <organismsDiffer>false</organismsDiffer>
    <experiments>10</experiments>
</comment>
<comment type="interaction">
    <interactant intactId="EBI-25376">
        <id>P40563</id>
    </interactant>
    <interactant intactId="EBI-3437">
        <id>P47068</id>
        <label>BBC1</label>
    </interactant>
    <organismsDiffer>false</organismsDiffer>
    <experiments>9</experiments>
</comment>
<comment type="interaction">
    <interactant intactId="EBI-25376">
        <id>P40563</id>
    </interactant>
    <interactant intactId="EBI-3889">
        <id>P38822</id>
        <label>BZZ1</label>
    </interactant>
    <organismsDiffer>false</organismsDiffer>
    <experiments>7</experiments>
</comment>
<comment type="interaction">
    <interactant intactId="EBI-25376">
        <id>P40563</id>
    </interactant>
    <interactant intactId="EBI-4013">
        <id>P13517</id>
        <label>CAP2</label>
    </interactant>
    <organismsDiffer>false</organismsDiffer>
    <experiments>3</experiments>
</comment>
<comment type="interaction">
    <interactant intactId="EBI-25376">
        <id>P40563</id>
    </interactant>
    <interactant intactId="EBI-1382">
        <id>P38753</id>
        <label>HSE1</label>
    </interactant>
    <organismsDiffer>false</organismsDiffer>
    <experiments>4</experiments>
</comment>
<comment type="interaction">
    <interactant intactId="EBI-25376">
        <id>P40563</id>
    </interactant>
    <interactant intactId="EBI-23329">
        <id>P53281</id>
        <label>LSB1</label>
    </interactant>
    <organismsDiffer>false</organismsDiffer>
    <experiments>5</experiments>
</comment>
<comment type="interaction">
    <interactant intactId="EBI-25376">
        <id>P40563</id>
    </interactant>
    <interactant intactId="EBI-22980">
        <id>P43603</id>
        <label>LSB3</label>
    </interactant>
    <organismsDiffer>false</organismsDiffer>
    <experiments>2</experiments>
</comment>
<comment type="interaction">
    <interactant intactId="EBI-25376">
        <id>P40563</id>
    </interactant>
    <interactant intactId="EBI-11670">
        <id>P36006</id>
        <label>MYO3</label>
    </interactant>
    <organismsDiffer>false</organismsDiffer>
    <experiments>3</experiments>
</comment>
<comment type="interaction">
    <interactant intactId="EBI-25376">
        <id>P40563</id>
    </interactant>
    <interactant intactId="EBI-11687">
        <id>Q04439</id>
        <label>MYO5</label>
    </interactant>
    <organismsDiffer>false</organismsDiffer>
    <experiments>2</experiments>
</comment>
<comment type="interaction">
    <interactant intactId="EBI-25376">
        <id>P40563</id>
    </interactant>
    <interactant intactId="EBI-34713">
        <id>Q12163</id>
        <label>NBP2</label>
    </interactant>
    <organismsDiffer>false</organismsDiffer>
    <experiments>4</experiments>
</comment>
<comment type="interaction">
    <interactant intactId="EBI-25376">
        <id>P40563</id>
    </interactant>
    <interactant intactId="EBI-17313">
        <id>P32790</id>
        <label>SLA1</label>
    </interactant>
    <organismsDiffer>false</organismsDiffer>
    <experiments>4</experiments>
</comment>
<comment type="interaction">
    <interactant intactId="EBI-25376">
        <id>P40563</id>
    </interactant>
    <interactant intactId="EBI-22573">
        <id>P40045</id>
        <label>TDA2</label>
    </interactant>
    <organismsDiffer>false</organismsDiffer>
    <experiments>3</experiments>
</comment>
<comment type="subcellular location">
    <subcellularLocation>
        <location evidence="3 7">Cytoplasm</location>
        <location evidence="3 7">Cytoskeleton</location>
        <location evidence="3 7">Actin patch</location>
    </subcellularLocation>
    <text>Cortical actin patches. Localizes at the shmoo tip.</text>
</comment>
<comment type="disruption phenotype">
    <text evidence="6">Increases the sensitivity to farnesol.</text>
</comment>
<comment type="miscellaneous">
    <text evidence="4">Present with 450 molecules/cell in log phase SD medium.</text>
</comment>
<comment type="similarity">
    <text evidence="9">Belongs to the AIM21 family.</text>
</comment>
<reference key="1">
    <citation type="journal article" date="1995" name="Yeast">
        <title>Nucleotide sequence and analysis of the centromeric region of yeast chromosome IX.</title>
        <authorList>
            <person name="Voss H."/>
            <person name="Tamames J."/>
            <person name="Teodoru C."/>
            <person name="Valencia A."/>
            <person name="Sensen C."/>
            <person name="Wiemann S."/>
            <person name="Schwager C."/>
            <person name="Zimmermann J."/>
            <person name="Sander C."/>
            <person name="Ansorge W."/>
        </authorList>
    </citation>
    <scope>NUCLEOTIDE SEQUENCE [GENOMIC DNA]</scope>
    <source>
        <strain>ATCC 204508 / S288c</strain>
    </source>
</reference>
<reference key="2">
    <citation type="journal article" date="1997" name="Nature">
        <title>The nucleotide sequence of Saccharomyces cerevisiae chromosome IX.</title>
        <authorList>
            <person name="Churcher C.M."/>
            <person name="Bowman S."/>
            <person name="Badcock K."/>
            <person name="Bankier A.T."/>
            <person name="Brown D."/>
            <person name="Chillingworth T."/>
            <person name="Connor R."/>
            <person name="Devlin K."/>
            <person name="Gentles S."/>
            <person name="Hamlin N."/>
            <person name="Harris D.E."/>
            <person name="Horsnell T."/>
            <person name="Hunt S."/>
            <person name="Jagels K."/>
            <person name="Jones M."/>
            <person name="Lye G."/>
            <person name="Moule S."/>
            <person name="Odell C."/>
            <person name="Pearson D."/>
            <person name="Rajandream M.A."/>
            <person name="Rice P."/>
            <person name="Rowley N."/>
            <person name="Skelton J."/>
            <person name="Smith V."/>
            <person name="Walsh S.V."/>
            <person name="Whitehead S."/>
            <person name="Barrell B.G."/>
        </authorList>
    </citation>
    <scope>NUCLEOTIDE SEQUENCE [LARGE SCALE GENOMIC DNA]</scope>
    <source>
        <strain>ATCC 204508 / S288c</strain>
    </source>
</reference>
<reference key="3">
    <citation type="journal article" date="2014" name="G3 (Bethesda)">
        <title>The reference genome sequence of Saccharomyces cerevisiae: Then and now.</title>
        <authorList>
            <person name="Engel S.R."/>
            <person name="Dietrich F.S."/>
            <person name="Fisk D.G."/>
            <person name="Binkley G."/>
            <person name="Balakrishnan R."/>
            <person name="Costanzo M.C."/>
            <person name="Dwight S.S."/>
            <person name="Hitz B.C."/>
            <person name="Karra K."/>
            <person name="Nash R.S."/>
            <person name="Weng S."/>
            <person name="Wong E.D."/>
            <person name="Lloyd P."/>
            <person name="Skrzypek M.S."/>
            <person name="Miyasato S.R."/>
            <person name="Simison M."/>
            <person name="Cherry J.M."/>
        </authorList>
    </citation>
    <scope>GENOME REANNOTATION</scope>
    <source>
        <strain>ATCC 204508 / S288c</strain>
    </source>
</reference>
<reference key="4">
    <citation type="journal article" date="2002" name="J. Biol. Chem.">
        <title>Unusual binding properties of the SH3 domain of the yeast actin-binding protein Abp1: structural and functional analysis.</title>
        <authorList>
            <person name="Fazi B."/>
            <person name="Cope M.J.T.V."/>
            <person name="Douangamath A."/>
            <person name="Ferracuti S."/>
            <person name="Schirwitz K."/>
            <person name="Zucconi A."/>
            <person name="Drubin D.G."/>
            <person name="Wilmanns M."/>
            <person name="Cesareni G."/>
            <person name="Castagnoli L."/>
        </authorList>
    </citation>
    <scope>INTERACTION WITH ABP1</scope>
</reference>
<reference key="5">
    <citation type="journal article" date="2003" name="Nature">
        <title>Global analysis of protein localization in budding yeast.</title>
        <authorList>
            <person name="Huh W.-K."/>
            <person name="Falvo J.V."/>
            <person name="Gerke L.C."/>
            <person name="Carroll A.S."/>
            <person name="Howson R.W."/>
            <person name="Weissman J.S."/>
            <person name="O'Shea E.K."/>
        </authorList>
    </citation>
    <scope>SUBCELLULAR LOCATION [LARGE SCALE ANALYSIS]</scope>
</reference>
<reference key="6">
    <citation type="journal article" date="2003" name="Nature">
        <title>Global analysis of protein expression in yeast.</title>
        <authorList>
            <person name="Ghaemmaghami S."/>
            <person name="Huh W.-K."/>
            <person name="Bower K."/>
            <person name="Howson R.W."/>
            <person name="Belle A."/>
            <person name="Dephoure N."/>
            <person name="O'Shea E.K."/>
            <person name="Weissman J.S."/>
        </authorList>
    </citation>
    <scope>LEVEL OF PROTEIN EXPRESSION [LARGE SCALE ANALYSIS]</scope>
</reference>
<reference key="7">
    <citation type="journal article" date="2004" name="PLoS Biol.">
        <title>Protein interaction networks by proteome peptide scanning.</title>
        <authorList>
            <person name="Landgraf C."/>
            <person name="Panni S."/>
            <person name="Montecchi-Palazzi L."/>
            <person name="Castagnoli L."/>
            <person name="Schneider-Mergener J."/>
            <person name="Volkmer-Engert R."/>
            <person name="Cesareni G."/>
        </authorList>
    </citation>
    <scope>INTERACTION WITH ABP1</scope>
</reference>
<reference key="8">
    <citation type="journal article" date="2006" name="Genes Dev.">
        <title>Systematic identification and functional screens of uncharacterized proteins associated with eukaryotic ribosomal complexes.</title>
        <authorList>
            <person name="Fleischer T.C."/>
            <person name="Weaver C.M."/>
            <person name="McAfee K.J."/>
            <person name="Jennings J.L."/>
            <person name="Link A.J."/>
        </authorList>
    </citation>
    <scope>COPURIFICATION WITH RIBOSOMAL COMPLEXES</scope>
    <scope>IDENTIFICATION BY MASS SPECTROMETRY</scope>
</reference>
<reference key="9">
    <citation type="journal article" date="2007" name="J. Biol. Chem.">
        <title>A chemogenomic screen in Saccharomyces cerevisiae uncovers a primary role for the mitochondria in farnesol toxicity and its regulation by the Pkc1 pathway.</title>
        <authorList>
            <person name="Fairn G.D."/>
            <person name="Macdonald K."/>
            <person name="McMaster C.R."/>
        </authorList>
    </citation>
    <scope>DISRUPTION PHENOTYPE</scope>
</reference>
<reference key="10">
    <citation type="journal article" date="2007" name="J. Proteome Res.">
        <title>Large-scale phosphorylation analysis of alpha-factor-arrested Saccharomyces cerevisiae.</title>
        <authorList>
            <person name="Li X."/>
            <person name="Gerber S.A."/>
            <person name="Rudner A.D."/>
            <person name="Beausoleil S.A."/>
            <person name="Haas W."/>
            <person name="Villen J."/>
            <person name="Elias J.E."/>
            <person name="Gygi S.P."/>
        </authorList>
    </citation>
    <scope>PHOSPHORYLATION [LARGE SCALE ANALYSIS] AT THR-18; SER-36; THR-58; THR-85; SER-183; THR-277; SER-625 AND SER-678</scope>
    <scope>IDENTIFICATION BY MASS SPECTROMETRY [LARGE SCALE ANALYSIS]</scope>
    <source>
        <strain>ADR376</strain>
    </source>
</reference>
<reference key="11">
    <citation type="journal article" date="2007" name="Proc. Natl. Acad. Sci. U.S.A.">
        <title>Analysis of phosphorylation sites on proteins from Saccharomyces cerevisiae by electron transfer dissociation (ETD) mass spectrometry.</title>
        <authorList>
            <person name="Chi A."/>
            <person name="Huttenhower C."/>
            <person name="Geer L.Y."/>
            <person name="Coon J.J."/>
            <person name="Syka J.E.P."/>
            <person name="Bai D.L."/>
            <person name="Shabanowitz J."/>
            <person name="Burke D.J."/>
            <person name="Troyanskaya O.G."/>
            <person name="Hunt D.F."/>
        </authorList>
    </citation>
    <scope>IDENTIFICATION BY MASS SPECTROMETRY [LARGE SCALE ANALYSIS]</scope>
</reference>
<reference key="12">
    <citation type="journal article" date="2008" name="Mol. Cell. Proteomics">
        <title>A multidimensional chromatography technology for in-depth phosphoproteome analysis.</title>
        <authorList>
            <person name="Albuquerque C.P."/>
            <person name="Smolka M.B."/>
            <person name="Payne S.H."/>
            <person name="Bafna V."/>
            <person name="Eng J."/>
            <person name="Zhou H."/>
        </authorList>
    </citation>
    <scope>PHOSPHORYLATION [LARGE SCALE ANALYSIS] AT SER-36; SER-231; THR-277; SER-324; SER-576; SER-620 AND SER-671</scope>
    <scope>IDENTIFICATION BY MASS SPECTROMETRY [LARGE SCALE ANALYSIS]</scope>
</reference>
<reference key="13">
    <citation type="journal article" date="2009" name="J. Proteome Res.">
        <title>Systematic definition of protein constituents along the major polarization axis reveals an adaptive reuse of the polarization machinery in pheromone-treated budding yeast.</title>
        <authorList>
            <person name="Narayanaswamy R."/>
            <person name="Moradi E.K."/>
            <person name="Niu W."/>
            <person name="Hart G.T."/>
            <person name="Davis M."/>
            <person name="McGary K.L."/>
            <person name="Ellington A.D."/>
            <person name="Marcotte E.M."/>
        </authorList>
    </citation>
    <scope>SUBCELLULAR LOCATION</scope>
</reference>
<reference key="14">
    <citation type="journal article" date="2009" name="PLoS Genet.">
        <title>Computationally driven, quantitative experiments discover genes required for mitochondrial biogenesis.</title>
        <authorList>
            <person name="Hess D.C."/>
            <person name="Myers C.L."/>
            <person name="Huttenhower C."/>
            <person name="Hibbs M.A."/>
            <person name="Hayes A.P."/>
            <person name="Paw J."/>
            <person name="Clore J.J."/>
            <person name="Mendoza R.M."/>
            <person name="Luis B.S."/>
            <person name="Nislow C."/>
            <person name="Giaever G."/>
            <person name="Costanzo M."/>
            <person name="Troyanskaya O.G."/>
            <person name="Caudy A.A."/>
        </authorList>
    </citation>
    <scope>FUNCTION</scope>
</reference>
<reference key="15">
    <citation type="journal article" date="2009" name="Science">
        <title>Global analysis of Cdk1 substrate phosphorylation sites provides insights into evolution.</title>
        <authorList>
            <person name="Holt L.J."/>
            <person name="Tuch B.B."/>
            <person name="Villen J."/>
            <person name="Johnson A.D."/>
            <person name="Gygi S.P."/>
            <person name="Morgan D.O."/>
        </authorList>
    </citation>
    <scope>PHOSPHORYLATION [LARGE SCALE ANALYSIS] AT THR-18; SER-36; THR-58; SER-70; THR-85; SER-104; SER-183; SER-206; THR-277; SER-284; THR-552; SER-576; SER-620; SER-623; SER-627; SER-667; SER-671; SER-675 AND SER-678</scope>
    <scope>IDENTIFICATION BY MASS SPECTROMETRY [LARGE SCALE ANALYSIS]</scope>
</reference>
<sequence length="679" mass="74763">MPSEVTPKVPERPSRRKTSELFPLSGSESGDIKANSEPPTPAGTPNVPTRRPILKAKTMTSFESGMDQESLPKVPLQRPVRRSTTEELNNVMNNTSKELEEIESLISKHNIHNVSRKKSPTSVEEGKVAAIHQNGQRSASDNKTSTNPSPLEKNEHEGAEGNESAISPSNLVNKSNNEVTEHSDSEDLTEKQKVHAALDNEAGDRSHFEEKLIPGDMKVQVDVSKDVEEGSLNALPPSGITESDDKAEKFTKHPESSLEELQKHQEQQEEKIFQNPTDEESTTSLNEKQEGKDNMEVNSQPQGPSDTETVIAATSSNVPSQIASEEENDVPVIPRSRPKKDFEAHVQKEELPNTQEKRVSEECDSTLISTEEESKIPKIPSERPKRRAPPPVPKKPSSRIAAFQEMLQKQQQQDLHNNGNSSATTASADIAKKHTDSSITSDTTKADFTSKLNGLFALPGMVNPGQLPPSLEKKLSSPDTESKLGPQDQSQAKTGPLGGTRRGRGPRGRKLPSKVASVEKIEEDDNTNKIEIFNNWNVSSSFSKEKVLIDTTPGEQAERALDEKSKSIPEEQREQSPNKMEAALCPFELDEKEKLPANAESDPLSQLPQTNAVGNRKAISEESLSPSEAIANRDQNDTTEIQEQQMEDQMEVDMERELSGGYEDVDSALHSEEASFHSL</sequence>